<comment type="function">
    <text evidence="1">May play the central regulatory role in sporulation. It may be an element of the effector pathway responsible for the activation of sporulation genes in response to nutritional stress. Spo0A may act in concert with Spo0H (a sigma factor) to control the expression of some genes that are critical to the sporulation process. Repressor of abrB, activator of the spoIIa operon. Binds the DNA sequence 5'-TGNCGAA-3' (0A box) (By similarity).</text>
</comment>
<comment type="cofactor">
    <cofactor evidence="1">
        <name>Ca(2+)</name>
        <dbReference type="ChEBI" id="CHEBI:29108"/>
    </cofactor>
    <text evidence="1">Binds 1 Ca(2+) ion per subunit.</text>
</comment>
<comment type="subcellular location">
    <subcellularLocation>
        <location evidence="4">Cytoplasm</location>
    </subcellularLocation>
</comment>
<comment type="PTM">
    <text evidence="1">Phosphorylated by KinA and KinB.</text>
</comment>
<name>SP0A_BACCR</name>
<keyword id="KW-0010">Activator</keyword>
<keyword id="KW-0106">Calcium</keyword>
<keyword id="KW-0963">Cytoplasm</keyword>
<keyword id="KW-0238">DNA-binding</keyword>
<keyword id="KW-0479">Metal-binding</keyword>
<keyword id="KW-0597">Phosphoprotein</keyword>
<keyword id="KW-1185">Reference proteome</keyword>
<keyword id="KW-0678">Repressor</keyword>
<keyword id="KW-0749">Sporulation</keyword>
<keyword id="KW-0804">Transcription</keyword>
<keyword id="KW-0805">Transcription regulation</keyword>
<keyword id="KW-0902">Two-component regulatory system</keyword>
<dbReference type="EMBL" id="AE016877">
    <property type="protein sequence ID" value="AAP11086.1"/>
    <property type="molecule type" value="Genomic_DNA"/>
</dbReference>
<dbReference type="RefSeq" id="NP_833885.1">
    <property type="nucleotide sequence ID" value="NC_004722.1"/>
</dbReference>
<dbReference type="RefSeq" id="WP_011110369.1">
    <property type="nucleotide sequence ID" value="NZ_CP138336.1"/>
</dbReference>
<dbReference type="SMR" id="P0A4I3"/>
<dbReference type="STRING" id="226900.BC_4170"/>
<dbReference type="GeneID" id="72450855"/>
<dbReference type="KEGG" id="bce:BC4170"/>
<dbReference type="PATRIC" id="fig|226900.8.peg.4309"/>
<dbReference type="HOGENOM" id="CLU_072509_0_0_9"/>
<dbReference type="OrthoDB" id="9793299at2"/>
<dbReference type="Proteomes" id="UP000001417">
    <property type="component" value="Chromosome"/>
</dbReference>
<dbReference type="GO" id="GO:0005737">
    <property type="term" value="C:cytoplasm"/>
    <property type="evidence" value="ECO:0007669"/>
    <property type="project" value="UniProtKB-SubCell"/>
</dbReference>
<dbReference type="GO" id="GO:0005509">
    <property type="term" value="F:calcium ion binding"/>
    <property type="evidence" value="ECO:0007669"/>
    <property type="project" value="InterPro"/>
</dbReference>
<dbReference type="GO" id="GO:0003677">
    <property type="term" value="F:DNA binding"/>
    <property type="evidence" value="ECO:0007669"/>
    <property type="project" value="UniProtKB-KW"/>
</dbReference>
<dbReference type="GO" id="GO:0003700">
    <property type="term" value="F:DNA-binding transcription factor activity"/>
    <property type="evidence" value="ECO:0007669"/>
    <property type="project" value="InterPro"/>
</dbReference>
<dbReference type="GO" id="GO:0051606">
    <property type="term" value="P:detection of stimulus"/>
    <property type="evidence" value="ECO:0007669"/>
    <property type="project" value="InterPro"/>
</dbReference>
<dbReference type="GO" id="GO:0000160">
    <property type="term" value="P:phosphorelay signal transduction system"/>
    <property type="evidence" value="ECO:0007669"/>
    <property type="project" value="UniProtKB-KW"/>
</dbReference>
<dbReference type="GO" id="GO:0042173">
    <property type="term" value="P:regulation of sporulation resulting in formation of a cellular spore"/>
    <property type="evidence" value="ECO:0007669"/>
    <property type="project" value="InterPro"/>
</dbReference>
<dbReference type="GO" id="GO:0030435">
    <property type="term" value="P:sporulation resulting in formation of a cellular spore"/>
    <property type="evidence" value="ECO:0007669"/>
    <property type="project" value="UniProtKB-KW"/>
</dbReference>
<dbReference type="CDD" id="cd17561">
    <property type="entry name" value="REC_Spo0A"/>
    <property type="match status" value="1"/>
</dbReference>
<dbReference type="FunFam" id="1.10.10.10:FF:000107">
    <property type="entry name" value="Stage 0 sporulation protein A"/>
    <property type="match status" value="1"/>
</dbReference>
<dbReference type="FunFam" id="3.40.50.2300:FF:000154">
    <property type="entry name" value="Stage 0 sporulation protein A"/>
    <property type="match status" value="1"/>
</dbReference>
<dbReference type="Gene3D" id="3.40.50.2300">
    <property type="match status" value="1"/>
</dbReference>
<dbReference type="Gene3D" id="1.10.10.10">
    <property type="entry name" value="Winged helix-like DNA-binding domain superfamily/Winged helix DNA-binding domain"/>
    <property type="match status" value="1"/>
</dbReference>
<dbReference type="InterPro" id="IPR011006">
    <property type="entry name" value="CheY-like_superfamily"/>
</dbReference>
<dbReference type="InterPro" id="IPR016032">
    <property type="entry name" value="Sig_transdc_resp-reg_C-effctor"/>
</dbReference>
<dbReference type="InterPro" id="IPR001789">
    <property type="entry name" value="Sig_transdc_resp-reg_receiver"/>
</dbReference>
<dbReference type="InterPro" id="IPR014879">
    <property type="entry name" value="Spo0A_C"/>
</dbReference>
<dbReference type="InterPro" id="IPR012052">
    <property type="entry name" value="Spore_0_A"/>
</dbReference>
<dbReference type="InterPro" id="IPR052048">
    <property type="entry name" value="ST_Response_Regulator"/>
</dbReference>
<dbReference type="InterPro" id="IPR036388">
    <property type="entry name" value="WH-like_DNA-bd_sf"/>
</dbReference>
<dbReference type="NCBIfam" id="TIGR02875">
    <property type="entry name" value="spore_0_A"/>
    <property type="match status" value="1"/>
</dbReference>
<dbReference type="PANTHER" id="PTHR43228:SF5">
    <property type="entry name" value="STAGE 0 SPORULATION PROTEIN A"/>
    <property type="match status" value="1"/>
</dbReference>
<dbReference type="PANTHER" id="PTHR43228">
    <property type="entry name" value="TWO-COMPONENT RESPONSE REGULATOR"/>
    <property type="match status" value="1"/>
</dbReference>
<dbReference type="Pfam" id="PF00072">
    <property type="entry name" value="Response_reg"/>
    <property type="match status" value="1"/>
</dbReference>
<dbReference type="Pfam" id="PF08769">
    <property type="entry name" value="Spo0A_C"/>
    <property type="match status" value="1"/>
</dbReference>
<dbReference type="PIRSF" id="PIRSF002937">
    <property type="entry name" value="Res_reg_Spo0A"/>
    <property type="match status" value="1"/>
</dbReference>
<dbReference type="SMART" id="SM00448">
    <property type="entry name" value="REC"/>
    <property type="match status" value="1"/>
</dbReference>
<dbReference type="SUPFAM" id="SSF46894">
    <property type="entry name" value="C-terminal effector domain of the bipartite response regulators"/>
    <property type="match status" value="1"/>
</dbReference>
<dbReference type="SUPFAM" id="SSF52172">
    <property type="entry name" value="CheY-like"/>
    <property type="match status" value="1"/>
</dbReference>
<dbReference type="PROSITE" id="PS50110">
    <property type="entry name" value="RESPONSE_REGULATORY"/>
    <property type="match status" value="1"/>
</dbReference>
<proteinExistence type="inferred from homology"/>
<reference key="1">
    <citation type="journal article" date="2003" name="Nature">
        <title>Genome sequence of Bacillus cereus and comparative analysis with Bacillus anthracis.</title>
        <authorList>
            <person name="Ivanova N."/>
            <person name="Sorokin A."/>
            <person name="Anderson I."/>
            <person name="Galleron N."/>
            <person name="Candelon B."/>
            <person name="Kapatral V."/>
            <person name="Bhattacharyya A."/>
            <person name="Reznik G."/>
            <person name="Mikhailova N."/>
            <person name="Lapidus A."/>
            <person name="Chu L."/>
            <person name="Mazur M."/>
            <person name="Goltsman E."/>
            <person name="Larsen N."/>
            <person name="D'Souza M."/>
            <person name="Walunas T."/>
            <person name="Grechkin Y."/>
            <person name="Pusch G."/>
            <person name="Haselkorn R."/>
            <person name="Fonstein M."/>
            <person name="Ehrlich S.D."/>
            <person name="Overbeek R."/>
            <person name="Kyrpides N.C."/>
        </authorList>
    </citation>
    <scope>NUCLEOTIDE SEQUENCE [LARGE SCALE GENOMIC DNA]</scope>
    <source>
        <strain>ATCC 14579 / DSM 31 / CCUG 7414 / JCM 2152 / NBRC 15305 / NCIMB 9373 / NCTC 2599 / NRRL B-3711</strain>
    </source>
</reference>
<sequence length="264" mass="29415">MEKIKVCLVDDNKELVSMLESYVAAQDDMEVIGTAYNGQECLNLLTDKQPDVLVLDIIMPHLDGLAVLEKMRHIERLKQPSVIMLTAFGQEDVTKKAVDLGASYFILKPFDMENLTSHIRQVSGKANAMIKRPLPSFRSATTVDGKPKNLDASITSIIHEIGVPAHIKGYMYLREAISMVYNDIELLGSITKVLYPDIAKKYNTTASRVERAIRHAIEVAWSRGNIDSISSLFGYTVSMSKAKPTNSEFIAMVADKLRLEHKAS</sequence>
<accession>P0A4I3</accession>
<accession>P52935</accession>
<feature type="chain" id="PRO_0000081229" description="Stage 0 sporulation protein A">
    <location>
        <begin position="1"/>
        <end position="264"/>
    </location>
</feature>
<feature type="domain" description="Response regulatory" evidence="3">
    <location>
        <begin position="5"/>
        <end position="123"/>
    </location>
</feature>
<feature type="DNA-binding region" description="H-T-H motif" evidence="2">
    <location>
        <begin position="196"/>
        <end position="215"/>
    </location>
</feature>
<feature type="binding site" evidence="1">
    <location>
        <position position="10"/>
    </location>
    <ligand>
        <name>Ca(2+)</name>
        <dbReference type="ChEBI" id="CHEBI:29108"/>
    </ligand>
</feature>
<feature type="binding site" evidence="1">
    <location>
        <position position="11"/>
    </location>
    <ligand>
        <name>Ca(2+)</name>
        <dbReference type="ChEBI" id="CHEBI:29108"/>
    </ligand>
</feature>
<feature type="binding site" evidence="1">
    <location>
        <position position="56"/>
    </location>
    <ligand>
        <name>Ca(2+)</name>
        <dbReference type="ChEBI" id="CHEBI:29108"/>
    </ligand>
</feature>
<feature type="modified residue" description="4-aspartylphosphate" evidence="3">
    <location>
        <position position="56"/>
    </location>
</feature>
<evidence type="ECO:0000250" key="1"/>
<evidence type="ECO:0000255" key="2"/>
<evidence type="ECO:0000255" key="3">
    <source>
        <dbReference type="PROSITE-ProRule" id="PRU00169"/>
    </source>
</evidence>
<evidence type="ECO:0000305" key="4"/>
<organism>
    <name type="scientific">Bacillus cereus (strain ATCC 14579 / DSM 31 / CCUG 7414 / JCM 2152 / NBRC 15305 / NCIMB 9373 / NCTC 2599 / NRRL B-3711)</name>
    <dbReference type="NCBI Taxonomy" id="226900"/>
    <lineage>
        <taxon>Bacteria</taxon>
        <taxon>Bacillati</taxon>
        <taxon>Bacillota</taxon>
        <taxon>Bacilli</taxon>
        <taxon>Bacillales</taxon>
        <taxon>Bacillaceae</taxon>
        <taxon>Bacillus</taxon>
        <taxon>Bacillus cereus group</taxon>
    </lineage>
</organism>
<protein>
    <recommendedName>
        <fullName>Stage 0 sporulation protein A</fullName>
    </recommendedName>
</protein>
<gene>
    <name type="primary">spo0A</name>
    <name type="ordered locus">BC_4170</name>
</gene>